<comment type="function">
    <text evidence="1 4">Plays a crucial role in the metabolism of thyroid hormones (TH) and has specific roles in TH activation and inactivation by deiodination. Catalyzes the deiodination of L-thyroxine (T4) to 3,3',5'-triiodothyronine (rT3), 3,5-diiodothyronine (3,5-T2) to 3-monoiodothyronine (3-T1), rT3 to 3',5'-diiodothyronine (3',5'-T2) and 3,3'-diiodothyronine (3,3'-T2) to 3'-monoiodothyronine (3'-T1) via inner-ring deiodination (IRD) (By similarity). Catalyzes the deiodination of 3,5,3'-triiodothyronine (T3) to 3,3'-diiodothyronine (3,3'-T2) via IRD (PubMed:7622463). Catalyzes the deiodination of 3-T1 to L-thyronine (T0) via outer-ring deiodination (ORD) (By similarity). Catalyzes the tyrosyl ring deiodinations of T4AM (3,3',5,5'-tetraiodothyronamine), rT3AM (3,3',5'-triiodothyronamine), T3AM (3,5,3'-triiodothyronamine), 3,5-T2AM (3,5-diiodothyronamine), 3,3'-T2AM (3,3'-diiodothyronamine) and 3-T1AM (3-iodothyronamine) (By similarity).</text>
</comment>
<comment type="catalytic activity">
    <reaction evidence="1">
        <text>3,3',5'-triiodo-L-thyronine + iodide + A + H(+) = L-thyroxine + AH2</text>
        <dbReference type="Rhea" id="RHEA:18897"/>
        <dbReference type="ChEBI" id="CHEBI:13193"/>
        <dbReference type="ChEBI" id="CHEBI:15378"/>
        <dbReference type="ChEBI" id="CHEBI:16382"/>
        <dbReference type="ChEBI" id="CHEBI:17499"/>
        <dbReference type="ChEBI" id="CHEBI:57261"/>
        <dbReference type="ChEBI" id="CHEBI:58448"/>
        <dbReference type="EC" id="1.21.99.3"/>
    </reaction>
    <physiologicalReaction direction="right-to-left" evidence="1">
        <dbReference type="Rhea" id="RHEA:18899"/>
    </physiologicalReaction>
</comment>
<comment type="catalytic activity">
    <reaction evidence="4">
        <text>3,3'-diiodo-L-thyronine + iodide + A + H(+) = 3,3',5-triiodo-L-thyronine + AH2</text>
        <dbReference type="Rhea" id="RHEA:82571"/>
        <dbReference type="ChEBI" id="CHEBI:13193"/>
        <dbReference type="ChEBI" id="CHEBI:15378"/>
        <dbReference type="ChEBI" id="CHEBI:16382"/>
        <dbReference type="ChEBI" id="CHEBI:17499"/>
        <dbReference type="ChEBI" id="CHEBI:176514"/>
        <dbReference type="ChEBI" id="CHEBI:533015"/>
    </reaction>
    <physiologicalReaction direction="right-to-left" evidence="6">
        <dbReference type="Rhea" id="RHEA:82573"/>
    </physiologicalReaction>
</comment>
<comment type="catalytic activity">
    <reaction evidence="1">
        <text>3-iodo-L-thyronine + iodide + A + H(+) = 3,5-diiodo-L-thyronine + AH2</text>
        <dbReference type="Rhea" id="RHEA:82895"/>
        <dbReference type="ChEBI" id="CHEBI:13193"/>
        <dbReference type="ChEBI" id="CHEBI:15378"/>
        <dbReference type="ChEBI" id="CHEBI:16382"/>
        <dbReference type="ChEBI" id="CHEBI:17499"/>
        <dbReference type="ChEBI" id="CHEBI:232626"/>
        <dbReference type="ChEBI" id="CHEBI:232627"/>
    </reaction>
    <physiologicalReaction direction="right-to-left" evidence="1">
        <dbReference type="Rhea" id="RHEA:82897"/>
    </physiologicalReaction>
</comment>
<comment type="catalytic activity">
    <reaction evidence="1">
        <text>L-thyronine + iodide + A + H(+) = 3-iodo-L-thyronine + AH2</text>
        <dbReference type="Rhea" id="RHEA:83771"/>
        <dbReference type="ChEBI" id="CHEBI:13193"/>
        <dbReference type="ChEBI" id="CHEBI:15378"/>
        <dbReference type="ChEBI" id="CHEBI:16382"/>
        <dbReference type="ChEBI" id="CHEBI:17499"/>
        <dbReference type="ChEBI" id="CHEBI:232627"/>
        <dbReference type="ChEBI" id="CHEBI:233333"/>
    </reaction>
    <physiologicalReaction direction="right-to-left" evidence="1">
        <dbReference type="Rhea" id="RHEA:83773"/>
    </physiologicalReaction>
</comment>
<comment type="catalytic activity">
    <reaction evidence="1">
        <text>3',5'-diiodo-L-thyronine + iodide + A + H(+) = 3,3',5'-triiodo-L-thyronine + AH2</text>
        <dbReference type="Rhea" id="RHEA:83775"/>
        <dbReference type="ChEBI" id="CHEBI:13193"/>
        <dbReference type="ChEBI" id="CHEBI:15378"/>
        <dbReference type="ChEBI" id="CHEBI:16382"/>
        <dbReference type="ChEBI" id="CHEBI:17499"/>
        <dbReference type="ChEBI" id="CHEBI:57261"/>
        <dbReference type="ChEBI" id="CHEBI:195762"/>
    </reaction>
    <physiologicalReaction direction="right-to-left" evidence="1">
        <dbReference type="Rhea" id="RHEA:83777"/>
    </physiologicalReaction>
</comment>
<comment type="catalytic activity">
    <reaction evidence="1">
        <text>3'-iodo-L-thyronine + iodide + A + H(+) = 3,3'-diiodo-L-thyronine + AH2</text>
        <dbReference type="Rhea" id="RHEA:83779"/>
        <dbReference type="ChEBI" id="CHEBI:13193"/>
        <dbReference type="ChEBI" id="CHEBI:15378"/>
        <dbReference type="ChEBI" id="CHEBI:16382"/>
        <dbReference type="ChEBI" id="CHEBI:17499"/>
        <dbReference type="ChEBI" id="CHEBI:176514"/>
        <dbReference type="ChEBI" id="CHEBI:232695"/>
    </reaction>
    <physiologicalReaction direction="right-to-left" evidence="1">
        <dbReference type="Rhea" id="RHEA:83781"/>
    </physiologicalReaction>
</comment>
<comment type="catalytic activity">
    <reaction evidence="1">
        <text>3,3',5'-triiodothyronamine + iodide + A + H(+) = 3,3',5,5'-tetraiodothyronamine + AH2</text>
        <dbReference type="Rhea" id="RHEA:83807"/>
        <dbReference type="ChEBI" id="CHEBI:13193"/>
        <dbReference type="ChEBI" id="CHEBI:15378"/>
        <dbReference type="ChEBI" id="CHEBI:16382"/>
        <dbReference type="ChEBI" id="CHEBI:17499"/>
        <dbReference type="ChEBI" id="CHEBI:233343"/>
        <dbReference type="ChEBI" id="CHEBI:233344"/>
    </reaction>
    <physiologicalReaction direction="right-to-left" evidence="1">
        <dbReference type="Rhea" id="RHEA:83809"/>
    </physiologicalReaction>
</comment>
<comment type="catalytic activity">
    <reaction evidence="1">
        <text>3',5'-diiodothyronamine + iodide + A + H(+) = 3,3',5'-triiodothyronamine + AH2</text>
        <dbReference type="Rhea" id="RHEA:83799"/>
        <dbReference type="ChEBI" id="CHEBI:13193"/>
        <dbReference type="ChEBI" id="CHEBI:15378"/>
        <dbReference type="ChEBI" id="CHEBI:16382"/>
        <dbReference type="ChEBI" id="CHEBI:17499"/>
        <dbReference type="ChEBI" id="CHEBI:233342"/>
        <dbReference type="ChEBI" id="CHEBI:233343"/>
    </reaction>
    <physiologicalReaction direction="right-to-left" evidence="1">
        <dbReference type="Rhea" id="RHEA:83801"/>
    </physiologicalReaction>
</comment>
<comment type="catalytic activity">
    <reaction evidence="1">
        <text>3,3'-diiodothyronamine + iodide + A + H(+) = 3,3',5-triiodothyronamine + AH2</text>
        <dbReference type="Rhea" id="RHEA:83811"/>
        <dbReference type="ChEBI" id="CHEBI:13193"/>
        <dbReference type="ChEBI" id="CHEBI:15378"/>
        <dbReference type="ChEBI" id="CHEBI:16382"/>
        <dbReference type="ChEBI" id="CHEBI:17499"/>
        <dbReference type="ChEBI" id="CHEBI:233341"/>
        <dbReference type="ChEBI" id="CHEBI:233426"/>
    </reaction>
    <physiologicalReaction direction="right-to-left" evidence="1">
        <dbReference type="Rhea" id="RHEA:83813"/>
    </physiologicalReaction>
</comment>
<comment type="catalytic activity">
    <reaction evidence="1">
        <text>3-iodothyronamine + iodide + A + H(+) = 3,5-diiodothyronamine + AH2</text>
        <dbReference type="Rhea" id="RHEA:83823"/>
        <dbReference type="ChEBI" id="CHEBI:13193"/>
        <dbReference type="ChEBI" id="CHEBI:15378"/>
        <dbReference type="ChEBI" id="CHEBI:16382"/>
        <dbReference type="ChEBI" id="CHEBI:17499"/>
        <dbReference type="ChEBI" id="CHEBI:231647"/>
        <dbReference type="ChEBI" id="CHEBI:233340"/>
    </reaction>
    <physiologicalReaction direction="right-to-left" evidence="1">
        <dbReference type="Rhea" id="RHEA:83825"/>
    </physiologicalReaction>
</comment>
<comment type="catalytic activity">
    <reaction evidence="1">
        <text>3'-iodothyronamine + iodide + A + H(+) = 3,3'-diiodothyronamine + AH2</text>
        <dbReference type="Rhea" id="RHEA:83815"/>
        <dbReference type="ChEBI" id="CHEBI:13193"/>
        <dbReference type="ChEBI" id="CHEBI:15378"/>
        <dbReference type="ChEBI" id="CHEBI:16382"/>
        <dbReference type="ChEBI" id="CHEBI:17499"/>
        <dbReference type="ChEBI" id="CHEBI:233339"/>
        <dbReference type="ChEBI" id="CHEBI:233341"/>
    </reaction>
    <physiologicalReaction direction="right-to-left" evidence="1">
        <dbReference type="Rhea" id="RHEA:83817"/>
    </physiologicalReaction>
</comment>
<comment type="catalytic activity">
    <reaction evidence="1">
        <text>thyronamine + iodide + A + H(+) = 3-iodothyronamine + AH2</text>
        <dbReference type="Rhea" id="RHEA:83819"/>
        <dbReference type="ChEBI" id="CHEBI:13193"/>
        <dbReference type="ChEBI" id="CHEBI:15378"/>
        <dbReference type="ChEBI" id="CHEBI:16382"/>
        <dbReference type="ChEBI" id="CHEBI:17499"/>
        <dbReference type="ChEBI" id="CHEBI:231647"/>
        <dbReference type="ChEBI" id="CHEBI:233334"/>
    </reaction>
    <physiologicalReaction direction="right-to-left" evidence="1">
        <dbReference type="Rhea" id="RHEA:83821"/>
    </physiologicalReaction>
</comment>
<comment type="biophysicochemical properties">
    <kinetics>
        <KM evidence="4">1 nM for 3,3',5-triiodo-L-thyronine</KM>
    </kinetics>
</comment>
<comment type="subunit">
    <text evidence="1">Monomer. Homodimer. May undergo minor heretodimerization with DIO1 and DIO2 (By similarity).</text>
</comment>
<comment type="subcellular location">
    <subcellularLocation>
        <location evidence="1">Cell membrane</location>
        <topology evidence="2">Single-pass type II membrane protein</topology>
    </subcellularLocation>
    <subcellularLocation>
        <location evidence="1">Endosome membrane</location>
        <topology evidence="2">Single-pass type II membrane protein</topology>
    </subcellularLocation>
</comment>
<comment type="tissue specificity">
    <text evidence="4">Neonatal skin, placenta, skeletal muscle and cerebral cortex.</text>
</comment>
<comment type="similarity">
    <text evidence="5">Belongs to the iodothyronine deiodinase family.</text>
</comment>
<comment type="caution">
    <text evidence="5">It is uncertain whether Met-1 or Met-27 is the initiator.</text>
</comment>
<comment type="sequence caution" evidence="5">
    <conflict type="erroneous initiation">
        <sequence resource="EMBL-CDS" id="AAC52241"/>
    </conflict>
    <text>Truncated N-terminus.</text>
</comment>
<protein>
    <recommendedName>
        <fullName>Thyroxine 5-deiodinase</fullName>
        <ecNumber evidence="1">1.21.99.3</ecNumber>
    </recommendedName>
    <alternativeName>
        <fullName>5DIII</fullName>
    </alternativeName>
    <alternativeName>
        <fullName>DIOIII</fullName>
    </alternativeName>
    <alternativeName>
        <fullName>Type 3 DI</fullName>
    </alternativeName>
    <alternativeName>
        <fullName>Type III iodothyronine deiodinase</fullName>
    </alternativeName>
</protein>
<keyword id="KW-1003">Cell membrane</keyword>
<keyword id="KW-0967">Endosome</keyword>
<keyword id="KW-0472">Membrane</keyword>
<keyword id="KW-0560">Oxidoreductase</keyword>
<keyword id="KW-1185">Reference proteome</keyword>
<keyword id="KW-0712">Selenocysteine</keyword>
<keyword id="KW-0735">Signal-anchor</keyword>
<keyword id="KW-0893">Thyroid hormones biosynthesis</keyword>
<keyword id="KW-0812">Transmembrane</keyword>
<keyword id="KW-1133">Transmembrane helix</keyword>
<reference key="1">
    <citation type="journal article" date="2004" name="Nature">
        <title>Genome sequence of the Brown Norway rat yields insights into mammalian evolution.</title>
        <authorList>
            <person name="Gibbs R.A."/>
            <person name="Weinstock G.M."/>
            <person name="Metzker M.L."/>
            <person name="Muzny D.M."/>
            <person name="Sodergren E.J."/>
            <person name="Scherer S."/>
            <person name="Scott G."/>
            <person name="Steffen D."/>
            <person name="Worley K.C."/>
            <person name="Burch P.E."/>
            <person name="Okwuonu G."/>
            <person name="Hines S."/>
            <person name="Lewis L."/>
            <person name="Deramo C."/>
            <person name="Delgado O."/>
            <person name="Dugan-Rocha S."/>
            <person name="Miner G."/>
            <person name="Morgan M."/>
            <person name="Hawes A."/>
            <person name="Gill R."/>
            <person name="Holt R.A."/>
            <person name="Adams M.D."/>
            <person name="Amanatides P.G."/>
            <person name="Baden-Tillson H."/>
            <person name="Barnstead M."/>
            <person name="Chin S."/>
            <person name="Evans C.A."/>
            <person name="Ferriera S."/>
            <person name="Fosler C."/>
            <person name="Glodek A."/>
            <person name="Gu Z."/>
            <person name="Jennings D."/>
            <person name="Kraft C.L."/>
            <person name="Nguyen T."/>
            <person name="Pfannkoch C.M."/>
            <person name="Sitter C."/>
            <person name="Sutton G.G."/>
            <person name="Venter J.C."/>
            <person name="Woodage T."/>
            <person name="Smith D."/>
            <person name="Lee H.-M."/>
            <person name="Gustafson E."/>
            <person name="Cahill P."/>
            <person name="Kana A."/>
            <person name="Doucette-Stamm L."/>
            <person name="Weinstock K."/>
            <person name="Fechtel K."/>
            <person name="Weiss R.B."/>
            <person name="Dunn D.M."/>
            <person name="Green E.D."/>
            <person name="Blakesley R.W."/>
            <person name="Bouffard G.G."/>
            <person name="De Jong P.J."/>
            <person name="Osoegawa K."/>
            <person name="Zhu B."/>
            <person name="Marra M."/>
            <person name="Schein J."/>
            <person name="Bosdet I."/>
            <person name="Fjell C."/>
            <person name="Jones S."/>
            <person name="Krzywinski M."/>
            <person name="Mathewson C."/>
            <person name="Siddiqui A."/>
            <person name="Wye N."/>
            <person name="McPherson J."/>
            <person name="Zhao S."/>
            <person name="Fraser C.M."/>
            <person name="Shetty J."/>
            <person name="Shatsman S."/>
            <person name="Geer K."/>
            <person name="Chen Y."/>
            <person name="Abramzon S."/>
            <person name="Nierman W.C."/>
            <person name="Havlak P.H."/>
            <person name="Chen R."/>
            <person name="Durbin K.J."/>
            <person name="Egan A."/>
            <person name="Ren Y."/>
            <person name="Song X.-Z."/>
            <person name="Li B."/>
            <person name="Liu Y."/>
            <person name="Qin X."/>
            <person name="Cawley S."/>
            <person name="Cooney A.J."/>
            <person name="D'Souza L.M."/>
            <person name="Martin K."/>
            <person name="Wu J.Q."/>
            <person name="Gonzalez-Garay M.L."/>
            <person name="Jackson A.R."/>
            <person name="Kalafus K.J."/>
            <person name="McLeod M.P."/>
            <person name="Milosavljevic A."/>
            <person name="Virk D."/>
            <person name="Volkov A."/>
            <person name="Wheeler D.A."/>
            <person name="Zhang Z."/>
            <person name="Bailey J.A."/>
            <person name="Eichler E.E."/>
            <person name="Tuzun E."/>
            <person name="Birney E."/>
            <person name="Mongin E."/>
            <person name="Ureta-Vidal A."/>
            <person name="Woodwark C."/>
            <person name="Zdobnov E."/>
            <person name="Bork P."/>
            <person name="Suyama M."/>
            <person name="Torrents D."/>
            <person name="Alexandersson M."/>
            <person name="Trask B.J."/>
            <person name="Young J.M."/>
            <person name="Huang H."/>
            <person name="Wang H."/>
            <person name="Xing H."/>
            <person name="Daniels S."/>
            <person name="Gietzen D."/>
            <person name="Schmidt J."/>
            <person name="Stevens K."/>
            <person name="Vitt U."/>
            <person name="Wingrove J."/>
            <person name="Camara F."/>
            <person name="Mar Alba M."/>
            <person name="Abril J.F."/>
            <person name="Guigo R."/>
            <person name="Smit A."/>
            <person name="Dubchak I."/>
            <person name="Rubin E.M."/>
            <person name="Couronne O."/>
            <person name="Poliakov A."/>
            <person name="Huebner N."/>
            <person name="Ganten D."/>
            <person name="Goesele C."/>
            <person name="Hummel O."/>
            <person name="Kreitler T."/>
            <person name="Lee Y.-A."/>
            <person name="Monti J."/>
            <person name="Schulz H."/>
            <person name="Zimdahl H."/>
            <person name="Himmelbauer H."/>
            <person name="Lehrach H."/>
            <person name="Jacob H.J."/>
            <person name="Bromberg S."/>
            <person name="Gullings-Handley J."/>
            <person name="Jensen-Seaman M.I."/>
            <person name="Kwitek A.E."/>
            <person name="Lazar J."/>
            <person name="Pasko D."/>
            <person name="Tonellato P.J."/>
            <person name="Twigger S."/>
            <person name="Ponting C.P."/>
            <person name="Duarte J.M."/>
            <person name="Rice S."/>
            <person name="Goodstadt L."/>
            <person name="Beatson S.A."/>
            <person name="Emes R.D."/>
            <person name="Winter E.E."/>
            <person name="Webber C."/>
            <person name="Brandt P."/>
            <person name="Nyakatura G."/>
            <person name="Adetobi M."/>
            <person name="Chiaromonte F."/>
            <person name="Elnitski L."/>
            <person name="Eswara P."/>
            <person name="Hardison R.C."/>
            <person name="Hou M."/>
            <person name="Kolbe D."/>
            <person name="Makova K."/>
            <person name="Miller W."/>
            <person name="Nekrutenko A."/>
            <person name="Riemer C."/>
            <person name="Schwartz S."/>
            <person name="Taylor J."/>
            <person name="Yang S."/>
            <person name="Zhang Y."/>
            <person name="Lindpaintner K."/>
            <person name="Andrews T.D."/>
            <person name="Caccamo M."/>
            <person name="Clamp M."/>
            <person name="Clarke L."/>
            <person name="Curwen V."/>
            <person name="Durbin R.M."/>
            <person name="Eyras E."/>
            <person name="Searle S.M."/>
            <person name="Cooper G.M."/>
            <person name="Batzoglou S."/>
            <person name="Brudno M."/>
            <person name="Sidow A."/>
            <person name="Stone E.A."/>
            <person name="Payseur B.A."/>
            <person name="Bourque G."/>
            <person name="Lopez-Otin C."/>
            <person name="Puente X.S."/>
            <person name="Chakrabarti K."/>
            <person name="Chatterji S."/>
            <person name="Dewey C."/>
            <person name="Pachter L."/>
            <person name="Bray N."/>
            <person name="Yap V.B."/>
            <person name="Caspi A."/>
            <person name="Tesler G."/>
            <person name="Pevzner P.A."/>
            <person name="Haussler D."/>
            <person name="Roskin K.M."/>
            <person name="Baertsch R."/>
            <person name="Clawson H."/>
            <person name="Furey T.S."/>
            <person name="Hinrichs A.S."/>
            <person name="Karolchik D."/>
            <person name="Kent W.J."/>
            <person name="Rosenbloom K.R."/>
            <person name="Trumbower H."/>
            <person name="Weirauch M."/>
            <person name="Cooper D.N."/>
            <person name="Stenson P.D."/>
            <person name="Ma B."/>
            <person name="Brent M."/>
            <person name="Arumugam M."/>
            <person name="Shteynberg D."/>
            <person name="Copley R.R."/>
            <person name="Taylor M.S."/>
            <person name="Riethman H."/>
            <person name="Mudunuri U."/>
            <person name="Peterson J."/>
            <person name="Guyer M."/>
            <person name="Felsenfeld A."/>
            <person name="Old S."/>
            <person name="Mockrin S."/>
            <person name="Collins F.S."/>
        </authorList>
    </citation>
    <scope>NUCLEOTIDE SEQUENCE [LARGE SCALE GENOMIC DNA]</scope>
    <source>
        <strain>Brown Norway</strain>
    </source>
</reference>
<reference key="2">
    <citation type="journal article" date="1995" name="J. Biol. Chem.">
        <title>Cloning and expression of a cDNA for a mammalian type III iodothyronine deiodinase.</title>
        <authorList>
            <person name="Croteau W."/>
            <person name="Whittemore S.L."/>
            <person name="Schneider M.J."/>
            <person name="St Germain D.L."/>
        </authorList>
    </citation>
    <scope>NUCLEOTIDE SEQUENCE [MRNA] OF 11-304</scope>
    <scope>FUNCTION</scope>
    <scope>BIOPHYSICOCHEMICAL PROPERTIES</scope>
    <scope>TISSUE SPECIFICITY</scope>
    <scope>SELENOCYSTEINE AT SEC-170</scope>
    <scope>MUTAGENESIS OF SEC-170</scope>
    <scope>CATALYTIC ACTIVITY</scope>
    <scope>ACTIVE SITE</scope>
    <source>
        <strain>Sprague-Dawley</strain>
        <tissue>Skin</tissue>
    </source>
</reference>
<sequence length="304" mass="34096">MPRQAASRLVVGEGEGPPGASGPAATMLRSLLLHSLRLCAQTASCLVLFPRFLGTAFMLWLLDFLCIRKHFLRRRHPDHPEPEVELNSEGEEMPPDDPPICVSDDNRLCTLASLKAVWHGQKLDFFKQAHEGGPAPNSEVVRPDGFQSQRILDYAQGTRPLVLNFGSCTUPPFMARMSAFQRLVTKYQRDVDFLIIYIEEAHPSDGWVTTDSPYVIPQHRSLEDRVSAARVLQQGAPGCALVLDTMANSSSSAYGAYFERLYVIQSGTIMYQGGRGPDGYQVSELRTWLERYDEQLHGTRPRRL</sequence>
<accession>P49897</accession>
<name>IOD3_RAT</name>
<feature type="chain" id="PRO_0000154325" description="Thyroxine 5-deiodinase">
    <location>
        <begin position="1"/>
        <end position="304"/>
    </location>
</feature>
<feature type="topological domain" description="Cytoplasmic" evidence="2">
    <location>
        <begin position="1"/>
        <end position="42"/>
    </location>
</feature>
<feature type="transmembrane region" description="Helical; Signal-anchor for type II membrane protein" evidence="2">
    <location>
        <begin position="43"/>
        <end position="62"/>
    </location>
</feature>
<feature type="topological domain" description="Extracellular" evidence="2">
    <location>
        <begin position="63"/>
        <end position="304"/>
    </location>
</feature>
<feature type="region of interest" description="Disordered" evidence="3">
    <location>
        <begin position="1"/>
        <end position="22"/>
    </location>
</feature>
<feature type="active site" evidence="4">
    <location>
        <position position="170"/>
    </location>
</feature>
<feature type="non-standard amino acid" description="Selenocysteine" evidence="4">
    <location>
        <position position="170"/>
    </location>
</feature>
<feature type="mutagenesis site" description="Loss of enzyme activity." evidence="4">
    <original>U</original>
    <variation>L</variation>
    <location>
        <position position="170"/>
    </location>
</feature>
<gene>
    <name type="primary">Dio3</name>
    <name type="synonym">Itdi3</name>
    <name type="synonym">Txdi3</name>
</gene>
<evidence type="ECO:0000250" key="1">
    <source>
        <dbReference type="UniProtKB" id="P55073"/>
    </source>
</evidence>
<evidence type="ECO:0000255" key="2"/>
<evidence type="ECO:0000256" key="3">
    <source>
        <dbReference type="SAM" id="MobiDB-lite"/>
    </source>
</evidence>
<evidence type="ECO:0000269" key="4">
    <source>
    </source>
</evidence>
<evidence type="ECO:0000305" key="5"/>
<evidence type="ECO:0000305" key="6">
    <source>
    </source>
</evidence>
<proteinExistence type="evidence at protein level"/>
<dbReference type="EC" id="1.21.99.3" evidence="1"/>
<dbReference type="EMBL" id="AABR06046288">
    <property type="status" value="NOT_ANNOTATED_CDS"/>
    <property type="molecule type" value="Genomic_DNA"/>
</dbReference>
<dbReference type="EMBL" id="U24282">
    <property type="protein sequence ID" value="AAC52241.2"/>
    <property type="status" value="ALT_INIT"/>
    <property type="molecule type" value="mRNA"/>
</dbReference>
<dbReference type="PIR" id="A57240">
    <property type="entry name" value="A57240"/>
</dbReference>
<dbReference type="RefSeq" id="NP_058906.3">
    <property type="nucleotide sequence ID" value="NM_017210.4"/>
</dbReference>
<dbReference type="PhosphoSitePlus" id="P49897"/>
<dbReference type="Ensembl" id="ENSRNOT00000078113.2">
    <property type="protein sequence ID" value="ENSRNOP00000093110.1"/>
    <property type="gene ID" value="ENSRNOG00000052017.2"/>
</dbReference>
<dbReference type="GeneID" id="29475"/>
<dbReference type="KEGG" id="rno:29475"/>
<dbReference type="AGR" id="RGD:68420"/>
<dbReference type="CTD" id="1735"/>
<dbReference type="RGD" id="68420">
    <property type="gene designation" value="Dio3"/>
</dbReference>
<dbReference type="GeneTree" id="ENSGT00940000154482"/>
<dbReference type="InParanoid" id="P49897"/>
<dbReference type="OMA" id="CSXPPFM"/>
<dbReference type="OrthoDB" id="428577at2759"/>
<dbReference type="BRENDA" id="1.21.99.3">
    <property type="organism ID" value="5301"/>
</dbReference>
<dbReference type="Reactome" id="R-RNO-350864">
    <property type="pathway name" value="Regulation of thyroid hormone activity"/>
</dbReference>
<dbReference type="PRO" id="PR:P49897"/>
<dbReference type="Proteomes" id="UP000002494">
    <property type="component" value="Chromosome 6"/>
</dbReference>
<dbReference type="GO" id="GO:0010008">
    <property type="term" value="C:endosome membrane"/>
    <property type="evidence" value="ECO:0007669"/>
    <property type="project" value="UniProtKB-SubCell"/>
</dbReference>
<dbReference type="GO" id="GO:0005886">
    <property type="term" value="C:plasma membrane"/>
    <property type="evidence" value="ECO:0007669"/>
    <property type="project" value="UniProtKB-SubCell"/>
</dbReference>
<dbReference type="GO" id="GO:0004800">
    <property type="term" value="F:thyroxine 5'-deiodinase activity"/>
    <property type="evidence" value="ECO:0000266"/>
    <property type="project" value="RGD"/>
</dbReference>
<dbReference type="GO" id="GO:0033798">
    <property type="term" value="F:thyroxine 5-deiodinase activity"/>
    <property type="evidence" value="ECO:0000250"/>
    <property type="project" value="UniProtKB"/>
</dbReference>
<dbReference type="GO" id="GO:0006915">
    <property type="term" value="P:apoptotic process"/>
    <property type="evidence" value="ECO:0000266"/>
    <property type="project" value="RGD"/>
</dbReference>
<dbReference type="GO" id="GO:0070342">
    <property type="term" value="P:brown fat cell proliferation"/>
    <property type="evidence" value="ECO:0000270"/>
    <property type="project" value="RGD"/>
</dbReference>
<dbReference type="GO" id="GO:0042446">
    <property type="term" value="P:hormone biosynthetic process"/>
    <property type="evidence" value="ECO:0007669"/>
    <property type="project" value="UniProtKB-KW"/>
</dbReference>
<dbReference type="GO" id="GO:0040018">
    <property type="term" value="P:positive regulation of multicellular organism growth"/>
    <property type="evidence" value="ECO:0000266"/>
    <property type="project" value="RGD"/>
</dbReference>
<dbReference type="GO" id="GO:0001666">
    <property type="term" value="P:response to hypoxia"/>
    <property type="evidence" value="ECO:0000270"/>
    <property type="project" value="RGD"/>
</dbReference>
<dbReference type="GO" id="GO:0097474">
    <property type="term" value="P:retinal cone cell apoptotic process"/>
    <property type="evidence" value="ECO:0000266"/>
    <property type="project" value="RGD"/>
</dbReference>
<dbReference type="GO" id="GO:0046549">
    <property type="term" value="P:retinal cone cell development"/>
    <property type="evidence" value="ECO:0000266"/>
    <property type="project" value="RGD"/>
</dbReference>
<dbReference type="GO" id="GO:0042404">
    <property type="term" value="P:thyroid hormone catabolic process"/>
    <property type="evidence" value="ECO:0000266"/>
    <property type="project" value="RGD"/>
</dbReference>
<dbReference type="GO" id="GO:0042403">
    <property type="term" value="P:thyroid hormone metabolic process"/>
    <property type="evidence" value="ECO:0000266"/>
    <property type="project" value="RGD"/>
</dbReference>
<dbReference type="FunFam" id="3.40.30.10:FF:000239">
    <property type="entry name" value="Iodothyronine deiodinase"/>
    <property type="match status" value="1"/>
</dbReference>
<dbReference type="Gene3D" id="3.40.30.10">
    <property type="entry name" value="Glutaredoxin"/>
    <property type="match status" value="1"/>
</dbReference>
<dbReference type="InterPro" id="IPR000643">
    <property type="entry name" value="Iodothyronine_deiodinase"/>
</dbReference>
<dbReference type="InterPro" id="IPR008261">
    <property type="entry name" value="Iodothyronine_deiodinase_AS"/>
</dbReference>
<dbReference type="InterPro" id="IPR027252">
    <property type="entry name" value="Iodothyronine_deiodinase_I/III"/>
</dbReference>
<dbReference type="InterPro" id="IPR036249">
    <property type="entry name" value="Thioredoxin-like_sf"/>
</dbReference>
<dbReference type="PANTHER" id="PTHR11781">
    <property type="entry name" value="IODOTHYRONINE DEIODINASE"/>
    <property type="match status" value="1"/>
</dbReference>
<dbReference type="PANTHER" id="PTHR11781:SF4">
    <property type="entry name" value="THYROXINE 5-DEIODINASE"/>
    <property type="match status" value="1"/>
</dbReference>
<dbReference type="Pfam" id="PF00837">
    <property type="entry name" value="T4_deiodinase"/>
    <property type="match status" value="1"/>
</dbReference>
<dbReference type="PIRSF" id="PIRSF001330">
    <property type="entry name" value="IOD"/>
    <property type="match status" value="1"/>
</dbReference>
<dbReference type="PIRSF" id="PIRSF500144">
    <property type="entry name" value="IODI_III"/>
    <property type="match status" value="1"/>
</dbReference>
<dbReference type="SUPFAM" id="SSF52833">
    <property type="entry name" value="Thioredoxin-like"/>
    <property type="match status" value="1"/>
</dbReference>
<dbReference type="PROSITE" id="PS01205">
    <property type="entry name" value="T4_DEIODINASE"/>
    <property type="match status" value="1"/>
</dbReference>
<organism>
    <name type="scientific">Rattus norvegicus</name>
    <name type="common">Rat</name>
    <dbReference type="NCBI Taxonomy" id="10116"/>
    <lineage>
        <taxon>Eukaryota</taxon>
        <taxon>Metazoa</taxon>
        <taxon>Chordata</taxon>
        <taxon>Craniata</taxon>
        <taxon>Vertebrata</taxon>
        <taxon>Euteleostomi</taxon>
        <taxon>Mammalia</taxon>
        <taxon>Eutheria</taxon>
        <taxon>Euarchontoglires</taxon>
        <taxon>Glires</taxon>
        <taxon>Rodentia</taxon>
        <taxon>Myomorpha</taxon>
        <taxon>Muroidea</taxon>
        <taxon>Muridae</taxon>
        <taxon>Murinae</taxon>
        <taxon>Rattus</taxon>
    </lineage>
</organism>